<dbReference type="EC" id="6.1.1.14" evidence="1"/>
<dbReference type="EMBL" id="AE005674">
    <property type="protein sequence ID" value="AAN45053.1"/>
    <property type="molecule type" value="Genomic_DNA"/>
</dbReference>
<dbReference type="EMBL" id="AE014073">
    <property type="protein sequence ID" value="AAP19135.1"/>
    <property type="molecule type" value="Genomic_DNA"/>
</dbReference>
<dbReference type="RefSeq" id="NP_709346.1">
    <property type="nucleotide sequence ID" value="NC_004337.2"/>
</dbReference>
<dbReference type="RefSeq" id="WP_001168544.1">
    <property type="nucleotide sequence ID" value="NZ_WPGW01000060.1"/>
</dbReference>
<dbReference type="SMR" id="P67027"/>
<dbReference type="STRING" id="198214.SF3603"/>
<dbReference type="PaxDb" id="198214-SF3603"/>
<dbReference type="GeneID" id="1026344"/>
<dbReference type="GeneID" id="93778290"/>
<dbReference type="KEGG" id="sfl:SF3603"/>
<dbReference type="KEGG" id="sfx:S4165"/>
<dbReference type="PATRIC" id="fig|198214.7.peg.4254"/>
<dbReference type="HOGENOM" id="CLU_057066_1_0_6"/>
<dbReference type="Proteomes" id="UP000001006">
    <property type="component" value="Chromosome"/>
</dbReference>
<dbReference type="Proteomes" id="UP000002673">
    <property type="component" value="Chromosome"/>
</dbReference>
<dbReference type="GO" id="GO:0005829">
    <property type="term" value="C:cytosol"/>
    <property type="evidence" value="ECO:0007669"/>
    <property type="project" value="TreeGrafter"/>
</dbReference>
<dbReference type="GO" id="GO:0005524">
    <property type="term" value="F:ATP binding"/>
    <property type="evidence" value="ECO:0007669"/>
    <property type="project" value="UniProtKB-UniRule"/>
</dbReference>
<dbReference type="GO" id="GO:0004820">
    <property type="term" value="F:glycine-tRNA ligase activity"/>
    <property type="evidence" value="ECO:0007669"/>
    <property type="project" value="UniProtKB-UniRule"/>
</dbReference>
<dbReference type="GO" id="GO:0006426">
    <property type="term" value="P:glycyl-tRNA aminoacylation"/>
    <property type="evidence" value="ECO:0007669"/>
    <property type="project" value="UniProtKB-UniRule"/>
</dbReference>
<dbReference type="CDD" id="cd00733">
    <property type="entry name" value="GlyRS_alpha_core"/>
    <property type="match status" value="1"/>
</dbReference>
<dbReference type="FunFam" id="1.20.58.180:FF:000001">
    <property type="entry name" value="Glycine--tRNA ligase alpha subunit"/>
    <property type="match status" value="1"/>
</dbReference>
<dbReference type="FunFam" id="3.30.930.10:FF:000006">
    <property type="entry name" value="Glycine--tRNA ligase alpha subunit"/>
    <property type="match status" value="1"/>
</dbReference>
<dbReference type="Gene3D" id="3.30.930.10">
    <property type="entry name" value="Bira Bifunctional Protein, Domain 2"/>
    <property type="match status" value="1"/>
</dbReference>
<dbReference type="Gene3D" id="1.20.58.180">
    <property type="entry name" value="Class II aaRS and biotin synthetases, domain 2"/>
    <property type="match status" value="1"/>
</dbReference>
<dbReference type="HAMAP" id="MF_00254">
    <property type="entry name" value="Gly_tRNA_synth_alpha"/>
    <property type="match status" value="1"/>
</dbReference>
<dbReference type="InterPro" id="IPR045864">
    <property type="entry name" value="aa-tRNA-synth_II/BPL/LPL"/>
</dbReference>
<dbReference type="InterPro" id="IPR006194">
    <property type="entry name" value="Gly-tRNA-synth_heterodimer"/>
</dbReference>
<dbReference type="InterPro" id="IPR002310">
    <property type="entry name" value="Gly-tRNA_ligase_asu"/>
</dbReference>
<dbReference type="NCBIfam" id="TIGR00388">
    <property type="entry name" value="glyQ"/>
    <property type="match status" value="1"/>
</dbReference>
<dbReference type="NCBIfam" id="NF006827">
    <property type="entry name" value="PRK09348.1"/>
    <property type="match status" value="1"/>
</dbReference>
<dbReference type="PANTHER" id="PTHR30075:SF2">
    <property type="entry name" value="GLYCINE--TRNA LIGASE, CHLOROPLASTIC_MITOCHONDRIAL 2"/>
    <property type="match status" value="1"/>
</dbReference>
<dbReference type="PANTHER" id="PTHR30075">
    <property type="entry name" value="GLYCYL-TRNA SYNTHETASE"/>
    <property type="match status" value="1"/>
</dbReference>
<dbReference type="Pfam" id="PF02091">
    <property type="entry name" value="tRNA-synt_2e"/>
    <property type="match status" value="1"/>
</dbReference>
<dbReference type="PRINTS" id="PR01044">
    <property type="entry name" value="TRNASYNTHGA"/>
</dbReference>
<dbReference type="SUPFAM" id="SSF55681">
    <property type="entry name" value="Class II aaRS and biotin synthetases"/>
    <property type="match status" value="1"/>
</dbReference>
<dbReference type="PROSITE" id="PS50861">
    <property type="entry name" value="AA_TRNA_LIGASE_II_GLYAB"/>
    <property type="match status" value="1"/>
</dbReference>
<evidence type="ECO:0000255" key="1">
    <source>
        <dbReference type="HAMAP-Rule" id="MF_00254"/>
    </source>
</evidence>
<sequence>MQKFDTRTFQGLILTLQDYWARQGCTIVQPLDMEVGAGTSHPMTCLRALGPEPMAAAYVQPSRRPTDGRYGENPNRLQHYYQFQVVIKPSPDNIQELYLGSLKELGMDPTIHDIRFVEDNWENPTLGAWGLGWEVWLNGMEVTQFTYFQQVGGLECKPVTGEITYGLERLAMYIQGVDSVYDLVWSDGPLGKTTYGDVFHQNEVEQSTYNFEYADVDFLFTCFEQYEKEAQQLLALENPLPLPAYERILKAAHSFNLLDARKAISVTERQRYILRIRTLTKAVAEAYYASREALGFPMCNKDK</sequence>
<proteinExistence type="inferred from homology"/>
<feature type="chain" id="PRO_0000072865" description="Glycine--tRNA ligase alpha subunit">
    <location>
        <begin position="1"/>
        <end position="303"/>
    </location>
</feature>
<gene>
    <name evidence="1" type="primary">glyQ</name>
    <name type="ordered locus">SF3603</name>
    <name type="ordered locus">S4165</name>
</gene>
<name>SYGA_SHIFL</name>
<reference key="1">
    <citation type="journal article" date="2002" name="Nucleic Acids Res.">
        <title>Genome sequence of Shigella flexneri 2a: insights into pathogenicity through comparison with genomes of Escherichia coli K12 and O157.</title>
        <authorList>
            <person name="Jin Q."/>
            <person name="Yuan Z."/>
            <person name="Xu J."/>
            <person name="Wang Y."/>
            <person name="Shen Y."/>
            <person name="Lu W."/>
            <person name="Wang J."/>
            <person name="Liu H."/>
            <person name="Yang J."/>
            <person name="Yang F."/>
            <person name="Zhang X."/>
            <person name="Zhang J."/>
            <person name="Yang G."/>
            <person name="Wu H."/>
            <person name="Qu D."/>
            <person name="Dong J."/>
            <person name="Sun L."/>
            <person name="Xue Y."/>
            <person name="Zhao A."/>
            <person name="Gao Y."/>
            <person name="Zhu J."/>
            <person name="Kan B."/>
            <person name="Ding K."/>
            <person name="Chen S."/>
            <person name="Cheng H."/>
            <person name="Yao Z."/>
            <person name="He B."/>
            <person name="Chen R."/>
            <person name="Ma D."/>
            <person name="Qiang B."/>
            <person name="Wen Y."/>
            <person name="Hou Y."/>
            <person name="Yu J."/>
        </authorList>
    </citation>
    <scope>NUCLEOTIDE SEQUENCE [LARGE SCALE GENOMIC DNA]</scope>
    <source>
        <strain>301 / Serotype 2a</strain>
    </source>
</reference>
<reference key="2">
    <citation type="journal article" date="2003" name="Infect. Immun.">
        <title>Complete genome sequence and comparative genomics of Shigella flexneri serotype 2a strain 2457T.</title>
        <authorList>
            <person name="Wei J."/>
            <person name="Goldberg M.B."/>
            <person name="Burland V."/>
            <person name="Venkatesan M.M."/>
            <person name="Deng W."/>
            <person name="Fournier G."/>
            <person name="Mayhew G.F."/>
            <person name="Plunkett G. III"/>
            <person name="Rose D.J."/>
            <person name="Darling A."/>
            <person name="Mau B."/>
            <person name="Perna N.T."/>
            <person name="Payne S.M."/>
            <person name="Runyen-Janecky L.J."/>
            <person name="Zhou S."/>
            <person name="Schwartz D.C."/>
            <person name="Blattner F.R."/>
        </authorList>
    </citation>
    <scope>NUCLEOTIDE SEQUENCE [LARGE SCALE GENOMIC DNA]</scope>
    <source>
        <strain>ATCC 700930 / 2457T / Serotype 2a</strain>
    </source>
</reference>
<keyword id="KW-0030">Aminoacyl-tRNA synthetase</keyword>
<keyword id="KW-0067">ATP-binding</keyword>
<keyword id="KW-0963">Cytoplasm</keyword>
<keyword id="KW-0436">Ligase</keyword>
<keyword id="KW-0547">Nucleotide-binding</keyword>
<keyword id="KW-0648">Protein biosynthesis</keyword>
<keyword id="KW-1185">Reference proteome</keyword>
<protein>
    <recommendedName>
        <fullName evidence="1">Glycine--tRNA ligase alpha subunit</fullName>
        <ecNumber evidence="1">6.1.1.14</ecNumber>
    </recommendedName>
    <alternativeName>
        <fullName evidence="1">Glycyl-tRNA synthetase alpha subunit</fullName>
        <shortName evidence="1">GlyRS</shortName>
    </alternativeName>
</protein>
<comment type="catalytic activity">
    <reaction evidence="1">
        <text>tRNA(Gly) + glycine + ATP = glycyl-tRNA(Gly) + AMP + diphosphate</text>
        <dbReference type="Rhea" id="RHEA:16013"/>
        <dbReference type="Rhea" id="RHEA-COMP:9664"/>
        <dbReference type="Rhea" id="RHEA-COMP:9683"/>
        <dbReference type="ChEBI" id="CHEBI:30616"/>
        <dbReference type="ChEBI" id="CHEBI:33019"/>
        <dbReference type="ChEBI" id="CHEBI:57305"/>
        <dbReference type="ChEBI" id="CHEBI:78442"/>
        <dbReference type="ChEBI" id="CHEBI:78522"/>
        <dbReference type="ChEBI" id="CHEBI:456215"/>
        <dbReference type="EC" id="6.1.1.14"/>
    </reaction>
</comment>
<comment type="subunit">
    <text evidence="1">Tetramer of two alpha and two beta subunits.</text>
</comment>
<comment type="subcellular location">
    <subcellularLocation>
        <location evidence="1">Cytoplasm</location>
    </subcellularLocation>
</comment>
<comment type="similarity">
    <text evidence="1">Belongs to the class-II aminoacyl-tRNA synthetase family.</text>
</comment>
<organism>
    <name type="scientific">Shigella flexneri</name>
    <dbReference type="NCBI Taxonomy" id="623"/>
    <lineage>
        <taxon>Bacteria</taxon>
        <taxon>Pseudomonadati</taxon>
        <taxon>Pseudomonadota</taxon>
        <taxon>Gammaproteobacteria</taxon>
        <taxon>Enterobacterales</taxon>
        <taxon>Enterobacteriaceae</taxon>
        <taxon>Shigella</taxon>
    </lineage>
</organism>
<accession>P67027</accession>
<accession>Q8XDN6</accession>